<protein>
    <recommendedName>
        <fullName evidence="1">Ion-translocating oxidoreductase complex subunit D</fullName>
        <ecNumber evidence="1">7.-.-.-</ecNumber>
    </recommendedName>
    <alternativeName>
        <fullName evidence="1">Rsx electron transport complex subunit D</fullName>
    </alternativeName>
</protein>
<reference key="1">
    <citation type="journal article" date="2006" name="Mol. Microbiol.">
        <title>Role of pathogenicity island-associated integrases in the genome plasticity of uropathogenic Escherichia coli strain 536.</title>
        <authorList>
            <person name="Hochhut B."/>
            <person name="Wilde C."/>
            <person name="Balling G."/>
            <person name="Middendorf B."/>
            <person name="Dobrindt U."/>
            <person name="Brzuszkiewicz E."/>
            <person name="Gottschalk G."/>
            <person name="Carniel E."/>
            <person name="Hacker J."/>
        </authorList>
    </citation>
    <scope>NUCLEOTIDE SEQUENCE [LARGE SCALE GENOMIC DNA]</scope>
    <source>
        <strain>536 / UPEC</strain>
    </source>
</reference>
<feature type="chain" id="PRO_0000298231" description="Ion-translocating oxidoreductase complex subunit D">
    <location>
        <begin position="1"/>
        <end position="352"/>
    </location>
</feature>
<feature type="transmembrane region" description="Helical" evidence="1">
    <location>
        <begin position="20"/>
        <end position="40"/>
    </location>
</feature>
<feature type="transmembrane region" description="Helical" evidence="1">
    <location>
        <begin position="42"/>
        <end position="62"/>
    </location>
</feature>
<feature type="transmembrane region" description="Helical" evidence="1">
    <location>
        <begin position="78"/>
        <end position="109"/>
    </location>
</feature>
<feature type="transmembrane region" description="Helical" evidence="1">
    <location>
        <begin position="123"/>
        <end position="143"/>
    </location>
</feature>
<feature type="transmembrane region" description="Helical" evidence="1">
    <location>
        <begin position="148"/>
        <end position="168"/>
    </location>
</feature>
<feature type="transmembrane region" description="Helical" evidence="1">
    <location>
        <begin position="214"/>
        <end position="234"/>
    </location>
</feature>
<feature type="transmembrane region" description="Helical" evidence="1">
    <location>
        <begin position="242"/>
        <end position="262"/>
    </location>
</feature>
<feature type="transmembrane region" description="Helical" evidence="1">
    <location>
        <begin position="267"/>
        <end position="287"/>
    </location>
</feature>
<feature type="transmembrane region" description="Helical" evidence="1">
    <location>
        <begin position="301"/>
        <end position="321"/>
    </location>
</feature>
<feature type="transmembrane region" description="Helical" evidence="1">
    <location>
        <begin position="322"/>
        <end position="342"/>
    </location>
</feature>
<feature type="modified residue" description="FMN phosphoryl threonine" evidence="1">
    <location>
        <position position="187"/>
    </location>
</feature>
<proteinExistence type="inferred from homology"/>
<accession>Q0THJ7</accession>
<keyword id="KW-0997">Cell inner membrane</keyword>
<keyword id="KW-1003">Cell membrane</keyword>
<keyword id="KW-0249">Electron transport</keyword>
<keyword id="KW-0285">Flavoprotein</keyword>
<keyword id="KW-0288">FMN</keyword>
<keyword id="KW-0472">Membrane</keyword>
<keyword id="KW-0597">Phosphoprotein</keyword>
<keyword id="KW-1278">Translocase</keyword>
<keyword id="KW-0812">Transmembrane</keyword>
<keyword id="KW-1133">Transmembrane helix</keyword>
<keyword id="KW-0813">Transport</keyword>
<organism>
    <name type="scientific">Escherichia coli O6:K15:H31 (strain 536 / UPEC)</name>
    <dbReference type="NCBI Taxonomy" id="362663"/>
    <lineage>
        <taxon>Bacteria</taxon>
        <taxon>Pseudomonadati</taxon>
        <taxon>Pseudomonadota</taxon>
        <taxon>Gammaproteobacteria</taxon>
        <taxon>Enterobacterales</taxon>
        <taxon>Enterobacteriaceae</taxon>
        <taxon>Escherichia</taxon>
    </lineage>
</organism>
<name>RSXD_ECOL5</name>
<gene>
    <name evidence="1" type="primary">rsxD</name>
    <name type="ordered locus">ECP_1575</name>
</gene>
<dbReference type="EC" id="7.-.-.-" evidence="1"/>
<dbReference type="EMBL" id="CP000247">
    <property type="protein sequence ID" value="ABG69582.1"/>
    <property type="molecule type" value="Genomic_DNA"/>
</dbReference>
<dbReference type="RefSeq" id="WP_000231919.1">
    <property type="nucleotide sequence ID" value="NC_008253.1"/>
</dbReference>
<dbReference type="SMR" id="Q0THJ7"/>
<dbReference type="KEGG" id="ecp:ECP_1575"/>
<dbReference type="HOGENOM" id="CLU_042020_0_0_6"/>
<dbReference type="Proteomes" id="UP000009182">
    <property type="component" value="Chromosome"/>
</dbReference>
<dbReference type="GO" id="GO:0005886">
    <property type="term" value="C:plasma membrane"/>
    <property type="evidence" value="ECO:0007669"/>
    <property type="project" value="UniProtKB-SubCell"/>
</dbReference>
<dbReference type="GO" id="GO:0022900">
    <property type="term" value="P:electron transport chain"/>
    <property type="evidence" value="ECO:0007669"/>
    <property type="project" value="UniProtKB-UniRule"/>
</dbReference>
<dbReference type="GO" id="GO:0055085">
    <property type="term" value="P:transmembrane transport"/>
    <property type="evidence" value="ECO:0007669"/>
    <property type="project" value="InterPro"/>
</dbReference>
<dbReference type="HAMAP" id="MF_00462">
    <property type="entry name" value="RsxD_RnfD"/>
    <property type="match status" value="1"/>
</dbReference>
<dbReference type="InterPro" id="IPR004338">
    <property type="entry name" value="NqrB/RnfD"/>
</dbReference>
<dbReference type="InterPro" id="IPR011303">
    <property type="entry name" value="RnfD_bac"/>
</dbReference>
<dbReference type="NCBIfam" id="NF002011">
    <property type="entry name" value="PRK00816.1"/>
    <property type="match status" value="1"/>
</dbReference>
<dbReference type="NCBIfam" id="TIGR01946">
    <property type="entry name" value="rnfD"/>
    <property type="match status" value="1"/>
</dbReference>
<dbReference type="PANTHER" id="PTHR30578">
    <property type="entry name" value="ELECTRON TRANSPORT COMPLEX PROTEIN RNFD"/>
    <property type="match status" value="1"/>
</dbReference>
<dbReference type="PANTHER" id="PTHR30578:SF0">
    <property type="entry name" value="ION-TRANSLOCATING OXIDOREDUCTASE COMPLEX SUBUNIT D"/>
    <property type="match status" value="1"/>
</dbReference>
<dbReference type="Pfam" id="PF03116">
    <property type="entry name" value="NQR2_RnfD_RnfE"/>
    <property type="match status" value="1"/>
</dbReference>
<evidence type="ECO:0000255" key="1">
    <source>
        <dbReference type="HAMAP-Rule" id="MF_00462"/>
    </source>
</evidence>
<comment type="function">
    <text evidence="1">Part of a membrane-bound complex that couples electron transfer with translocation of ions across the membrane. Required to maintain the reduced state of SoxR.</text>
</comment>
<comment type="cofactor">
    <cofactor evidence="1">
        <name>FMN</name>
        <dbReference type="ChEBI" id="CHEBI:58210"/>
    </cofactor>
</comment>
<comment type="subunit">
    <text evidence="1">The complex is composed of six subunits: RsxA, RsxB, RsxC, RsxD, RsxE and RsxG.</text>
</comment>
<comment type="subcellular location">
    <subcellularLocation>
        <location evidence="1">Cell inner membrane</location>
        <topology evidence="1">Multi-pass membrane protein</topology>
    </subcellularLocation>
</comment>
<comment type="similarity">
    <text evidence="1">Belongs to the NqrB/RnfD family.</text>
</comment>
<sequence>MVFRIASSPYTHNQRQTSRIMLLVLLAAVPGIAAQLWFFGWGTLVQILLASVSALLAEALVLKLRKQSVAATLKDNSALLTGLLLAVSIPPLAPWWMVVLGTVFAVIIAKQLYGGLGQNPFNPAMIGYVVLLISFPVQMTSWLPPHEIAVNIPGFIDAIQVIFSGHTASGGDMNTLRLGIDGISQATPLDTFKTSVRAGHSVEEIMQYPIYSGILAGAGWQWVNLAWLAGGVWLLWQKAIRWHIPLSFLVTLALCATLGWLFSPDTLAAPQIHLLSGATMLGAFFILTDPVTASTTNRGRLIFGALAGLLVWMIRSFGGYPDGVAFAVLLANITVPLIDYYTRPRVYGHRKG</sequence>